<sequence>MVNLNTIPPKNGRDYYIALGLEGSANKLGVGIVKHPLLPKHANSDLSYDCEAEMLSNIRDTYVTPPGEGFLPRDTARHHRNWCIRLIKQALAEADIKSPTLDIDVICFTKGPGMGAPLHSVVIAARTCSLLWDVPLVGVNHCIGHIEMGREITKAQNPVVLYVSGGNTQVIAYSEKRYRIFGETLDIAIGNCLDRFARTLKIPNEPSPGYNIEQLAKKAPHKENLVELPYTVKGMDLSMSGILASIDLLAKDLFKGNKKNKILFDKTTGEQKVTVEDLCYSLQENLFAMLVEITERAMAHVNSNQVLIVGGVGCNVRLQEMMAQMCKDRANGQVHATDNRFCIDNGVMIAQAGLLEYRMGGIVKDFSETVVTQKFRTDEVYAAWRD</sequence>
<gene>
    <name evidence="1" type="primary">KAE1</name>
    <name type="ordered locus">YKR038C</name>
</gene>
<keyword id="KW-0010">Activator</keyword>
<keyword id="KW-0012">Acyltransferase</keyword>
<keyword id="KW-0963">Cytoplasm</keyword>
<keyword id="KW-0479">Metal-binding</keyword>
<keyword id="KW-0539">Nucleus</keyword>
<keyword id="KW-1185">Reference proteome</keyword>
<keyword id="KW-0804">Transcription</keyword>
<keyword id="KW-0805">Transcription regulation</keyword>
<keyword id="KW-0808">Transferase</keyword>
<keyword id="KW-0819">tRNA processing</keyword>
<proteinExistence type="evidence at protein level"/>
<protein>
    <recommendedName>
        <fullName evidence="1">tRNA N6-adenosine threonylcarbamoyltransferase</fullName>
        <ecNumber evidence="1">2.3.1.234</ecNumber>
    </recommendedName>
    <alternativeName>
        <fullName>Kinase-associated endopeptidase 1</fullName>
    </alternativeName>
    <alternativeName>
        <fullName>N6-L-threonylcarbamoyladenine synthase</fullName>
        <shortName>t(6)A synthase</shortName>
    </alternativeName>
    <alternativeName>
        <fullName evidence="1">t(6)A37 threonylcarbamoyladenosine biosynthesis protein KAE1</fullName>
    </alternativeName>
    <alternativeName>
        <fullName evidence="1">tRNA threonylcarbamoyladenosine biosynthesis protein KAE1</fullName>
    </alternativeName>
</protein>
<name>KAE1_YEAST</name>
<organism>
    <name type="scientific">Saccharomyces cerevisiae (strain ATCC 204508 / S288c)</name>
    <name type="common">Baker's yeast</name>
    <dbReference type="NCBI Taxonomy" id="559292"/>
    <lineage>
        <taxon>Eukaryota</taxon>
        <taxon>Fungi</taxon>
        <taxon>Dikarya</taxon>
        <taxon>Ascomycota</taxon>
        <taxon>Saccharomycotina</taxon>
        <taxon>Saccharomycetes</taxon>
        <taxon>Saccharomycetales</taxon>
        <taxon>Saccharomycetaceae</taxon>
        <taxon>Saccharomyces</taxon>
    </lineage>
</organism>
<reference key="1">
    <citation type="journal article" date="1994" name="Nature">
        <title>Complete DNA sequence of yeast chromosome XI.</title>
        <authorList>
            <person name="Dujon B."/>
            <person name="Alexandraki D."/>
            <person name="Andre B."/>
            <person name="Ansorge W."/>
            <person name="Baladron V."/>
            <person name="Ballesta J.P.G."/>
            <person name="Banrevi A."/>
            <person name="Bolle P.-A."/>
            <person name="Bolotin-Fukuhara M."/>
            <person name="Bossier P."/>
            <person name="Bou G."/>
            <person name="Boyer J."/>
            <person name="Buitrago M.J."/>
            <person name="Cheret G."/>
            <person name="Colleaux L."/>
            <person name="Daignan-Fornier B."/>
            <person name="del Rey F."/>
            <person name="Dion C."/>
            <person name="Domdey H."/>
            <person name="Duesterhoeft A."/>
            <person name="Duesterhus S."/>
            <person name="Entian K.-D."/>
            <person name="Erfle H."/>
            <person name="Esteban P.F."/>
            <person name="Feldmann H."/>
            <person name="Fernandes L."/>
            <person name="Fobo G.M."/>
            <person name="Fritz C."/>
            <person name="Fukuhara H."/>
            <person name="Gabel C."/>
            <person name="Gaillon L."/>
            <person name="Garcia-Cantalejo J.M."/>
            <person name="Garcia-Ramirez J.J."/>
            <person name="Gent M.E."/>
            <person name="Ghazvini M."/>
            <person name="Goffeau A."/>
            <person name="Gonzalez A."/>
            <person name="Grothues D."/>
            <person name="Guerreiro P."/>
            <person name="Hegemann J.H."/>
            <person name="Hewitt N."/>
            <person name="Hilger F."/>
            <person name="Hollenberg C.P."/>
            <person name="Horaitis O."/>
            <person name="Indge K.J."/>
            <person name="Jacquier A."/>
            <person name="James C.M."/>
            <person name="Jauniaux J.-C."/>
            <person name="Jimenez A."/>
            <person name="Keuchel H."/>
            <person name="Kirchrath L."/>
            <person name="Kleine K."/>
            <person name="Koetter P."/>
            <person name="Legrain P."/>
            <person name="Liebl S."/>
            <person name="Louis E.J."/>
            <person name="Maia e Silva A."/>
            <person name="Marck C."/>
            <person name="Monnier A.-L."/>
            <person name="Moestl D."/>
            <person name="Mueller S."/>
            <person name="Obermaier B."/>
            <person name="Oliver S.G."/>
            <person name="Pallier C."/>
            <person name="Pascolo S."/>
            <person name="Pfeiffer F."/>
            <person name="Philippsen P."/>
            <person name="Planta R.J."/>
            <person name="Pohl F.M."/>
            <person name="Pohl T.M."/>
            <person name="Poehlmann R."/>
            <person name="Portetelle D."/>
            <person name="Purnelle B."/>
            <person name="Puzos V."/>
            <person name="Ramezani Rad M."/>
            <person name="Rasmussen S.W."/>
            <person name="Remacha M.A."/>
            <person name="Revuelta J.L."/>
            <person name="Richard G.-F."/>
            <person name="Rieger M."/>
            <person name="Rodrigues-Pousada C."/>
            <person name="Rose M."/>
            <person name="Rupp T."/>
            <person name="Santos M.A."/>
            <person name="Schwager C."/>
            <person name="Sensen C."/>
            <person name="Skala J."/>
            <person name="Soares H."/>
            <person name="Sor F."/>
            <person name="Stegemann J."/>
            <person name="Tettelin H."/>
            <person name="Thierry A."/>
            <person name="Tzermia M."/>
            <person name="Urrestarazu L.A."/>
            <person name="van Dyck L."/>
            <person name="van Vliet-Reedijk J.C."/>
            <person name="Valens M."/>
            <person name="Vandenbol M."/>
            <person name="Vilela C."/>
            <person name="Vissers S."/>
            <person name="von Wettstein D."/>
            <person name="Voss H."/>
            <person name="Wiemann S."/>
            <person name="Xu G."/>
            <person name="Zimmermann J."/>
            <person name="Haasemann M."/>
            <person name="Becker I."/>
            <person name="Mewes H.-W."/>
        </authorList>
    </citation>
    <scope>NUCLEOTIDE SEQUENCE [LARGE SCALE GENOMIC DNA]</scope>
    <source>
        <strain>ATCC 204508 / S288c</strain>
    </source>
</reference>
<reference key="2">
    <citation type="journal article" date="2014" name="G3 (Bethesda)">
        <title>The reference genome sequence of Saccharomyces cerevisiae: Then and now.</title>
        <authorList>
            <person name="Engel S.R."/>
            <person name="Dietrich F.S."/>
            <person name="Fisk D.G."/>
            <person name="Binkley G."/>
            <person name="Balakrishnan R."/>
            <person name="Costanzo M.C."/>
            <person name="Dwight S.S."/>
            <person name="Hitz B.C."/>
            <person name="Karra K."/>
            <person name="Nash R.S."/>
            <person name="Weng S."/>
            <person name="Wong E.D."/>
            <person name="Lloyd P."/>
            <person name="Skrzypek M.S."/>
            <person name="Miyasato S.R."/>
            <person name="Simison M."/>
            <person name="Cherry J.M."/>
        </authorList>
    </citation>
    <scope>GENOME REANNOTATION</scope>
    <source>
        <strain>ATCC 204508 / S288c</strain>
    </source>
</reference>
<reference key="3">
    <citation type="journal article" date="2003" name="Mol. Cell">
        <title>Assigning function to yeast proteins by integration of technologies.</title>
        <authorList>
            <person name="Hazbun T.R."/>
            <person name="Malmstroem L."/>
            <person name="Anderson S."/>
            <person name="Graczyk B.J."/>
            <person name="Fox B."/>
            <person name="Riffle M."/>
            <person name="Sundin B.A."/>
            <person name="Aranda J.D."/>
            <person name="McDonald W.H."/>
            <person name="Chiu C.-H."/>
            <person name="Snydsman B.E."/>
            <person name="Bradley P."/>
            <person name="Muller E.G.D."/>
            <person name="Fields S."/>
            <person name="Baker D."/>
            <person name="Yates J.R. III"/>
            <person name="Davis T.N."/>
        </authorList>
    </citation>
    <scope>IDENTIFICATION BY MASS SPECTROMETRY</scope>
</reference>
<reference key="4">
    <citation type="journal article" date="2003" name="Nature">
        <title>Sequencing and comparison of yeast species to identify genes and regulatory elements.</title>
        <authorList>
            <person name="Kellis M."/>
            <person name="Patterson N."/>
            <person name="Endrizzi M."/>
            <person name="Birren B.W."/>
            <person name="Lander E.S."/>
        </authorList>
    </citation>
    <scope>IDENTIFICATION OF PROBABLE INITIATION SITE</scope>
</reference>
<reference key="5">
    <citation type="journal article" date="2003" name="Nature">
        <title>Global analysis of protein localization in budding yeast.</title>
        <authorList>
            <person name="Huh W.-K."/>
            <person name="Falvo J.V."/>
            <person name="Gerke L.C."/>
            <person name="Carroll A.S."/>
            <person name="Howson R.W."/>
            <person name="Weissman J.S."/>
            <person name="O'Shea E.K."/>
        </authorList>
    </citation>
    <scope>SUBCELLULAR LOCATION [LARGE SCALE ANALYSIS]</scope>
</reference>
<reference key="6">
    <citation type="journal article" date="2003" name="Nature">
        <title>Global analysis of protein expression in yeast.</title>
        <authorList>
            <person name="Ghaemmaghami S."/>
            <person name="Huh W.-K."/>
            <person name="Bower K."/>
            <person name="Howson R.W."/>
            <person name="Belle A."/>
            <person name="Dephoure N."/>
            <person name="O'Shea E.K."/>
            <person name="Weissman J.S."/>
        </authorList>
    </citation>
    <scope>LEVEL OF PROTEIN EXPRESSION [LARGE SCALE ANALYSIS]</scope>
</reference>
<reference key="7">
    <citation type="journal article" date="2004" name="Biochem. J.">
        <title>Analysis of the interaction between piD261/Bud32, an evolutionarily conserved protein kinase of Saccharomyces cerevisiae, and the Grx4 glutaredoxin.</title>
        <authorList>
            <person name="Lopreiato R."/>
            <person name="Facchin S."/>
            <person name="Sartori G."/>
            <person name="Arrigoni G."/>
            <person name="Casonato S."/>
            <person name="Ruzzene M."/>
            <person name="Pinna L.A."/>
            <person name="Carignani G."/>
        </authorList>
    </citation>
    <scope>INTERACTION WITH BUD32</scope>
</reference>
<reference key="8">
    <citation type="journal article" date="2006" name="EMBO J.">
        <title>Yeast homolog of a cancer-testis antigen defines a new transcription complex.</title>
        <authorList>
            <person name="Kisseleva-Romanova E."/>
            <person name="Lopreiato R."/>
            <person name="Baudin-Baillieu A."/>
            <person name="Rousselle J.-C."/>
            <person name="Ilan L."/>
            <person name="Hofmann K."/>
            <person name="Namane A."/>
            <person name="Mann C."/>
            <person name="Libri D."/>
        </authorList>
    </citation>
    <scope>IDENTIFICATION IN THE EKC/KEOPS COMPLEX</scope>
    <scope>FUNCTION OF THE EKC/KEOPS COMPLEX</scope>
    <scope>SUBCELLULAR LOCATION</scope>
    <scope>IDENTIFICATION BY MASS SPECTROMETRY</scope>
</reference>
<reference key="9">
    <citation type="journal article" date="2006" name="Cell">
        <title>A genome-wide screen identifies the evolutionarily conserved KEOPS complex as a telomere regulator.</title>
        <authorList>
            <person name="Downey M."/>
            <person name="Houlsworth R."/>
            <person name="Maringele L."/>
            <person name="Rollie A."/>
            <person name="Brehme M."/>
            <person name="Galicia S."/>
            <person name="Guillard S."/>
            <person name="Partington M."/>
            <person name="Zubko M.K."/>
            <person name="Krogan N.J."/>
            <person name="Emili A."/>
            <person name="Greenblatt J.F."/>
            <person name="Harrington L."/>
            <person name="Lydall D."/>
            <person name="Durocher D."/>
        </authorList>
    </citation>
    <scope>FUNCTION</scope>
    <scope>IDENTIFICATION IN THE EKC/KEOPS COMPLEX</scope>
</reference>
<reference key="10">
    <citation type="journal article" date="2011" name="EMBO J.">
        <title>The highly conserved KEOPS/EKC complex is essential for a universal tRNA modification, t6A.</title>
        <authorList>
            <person name="Srinivasan M."/>
            <person name="Mehta P."/>
            <person name="Yu Y."/>
            <person name="Prugar E."/>
            <person name="Koonin E.V."/>
            <person name="Karzai A.W."/>
            <person name="Sternglanz R."/>
        </authorList>
    </citation>
    <scope>FUNCTION IN T(6)A37 FORMATION</scope>
</reference>
<reference key="11">
    <citation type="journal article" date="2011" name="EMBO J.">
        <title>A role for the universal Kae1/Qri7/YgjD (COG0533) family in tRNA modification.</title>
        <authorList>
            <person name="El Yacoubi B."/>
            <person name="Hatin I."/>
            <person name="Deutsch C."/>
            <person name="Kahveci T."/>
            <person name="Rousset J.P."/>
            <person name="Iwata-Reuyl D."/>
            <person name="Murzin A.G."/>
            <person name="de Crecy-Lagard V."/>
        </authorList>
    </citation>
    <scope>FUNCTION IN T(6)A37 FORMATION</scope>
</reference>
<reference key="12">
    <citation type="journal article" date="2011" name="Nucleic Acids Res.">
        <title>Gcn4 misregulation reveals a direct role for the evolutionary conserved EKC/KEOPS in the t6A modification of tRNAs.</title>
        <authorList>
            <person name="Daugeron M.C."/>
            <person name="Lenstra T.L."/>
            <person name="Frizzarin M."/>
            <person name="El Yacoubi B."/>
            <person name="Liu X."/>
            <person name="Baudin-Baillieu A."/>
            <person name="Lijnzaad P."/>
            <person name="Decourty L."/>
            <person name="Saveanu C."/>
            <person name="Jacquier A."/>
            <person name="Holstege F.C."/>
            <person name="de Crecy-Lagard V."/>
            <person name="van Tilbeurgh H."/>
            <person name="Libri D."/>
        </authorList>
    </citation>
    <scope>FUNCTION IN T(6)A37 FORMATION</scope>
</reference>
<reference key="13">
    <citation type="journal article" date="2013" name="Nucleic Acids Res.">
        <title>In vitro biosynthesis of a universal t6A tRNA modification in Archaea and Eukarya.</title>
        <authorList>
            <person name="Perrochia L."/>
            <person name="Crozat E."/>
            <person name="Hecker A."/>
            <person name="Zhang W."/>
            <person name="Bareille J."/>
            <person name="Collinet B."/>
            <person name="van Tilbeurgh H."/>
            <person name="Forterre P."/>
            <person name="Basta T."/>
        </authorList>
    </citation>
    <scope>FUNCTION IN T(6)A TRNA MODIFICATION</scope>
</reference>
<reference key="14">
    <citation type="journal article" date="2013" name="Nucleic Acids Res.">
        <title>Reconstitution and characterization of eukaryotic N6-threonylcarbamoylation of tRNA using a minimal enzyme system.</title>
        <authorList>
            <person name="Wan L.C."/>
            <person name="Mao D.Y."/>
            <person name="Neculai D."/>
            <person name="Strecker J."/>
            <person name="Chiovitti D."/>
            <person name="Kurinov I."/>
            <person name="Poda G."/>
            <person name="Thevakumaran N."/>
            <person name="Yuan F."/>
            <person name="Szilard R.K."/>
            <person name="Lissina E."/>
            <person name="Nislow C."/>
            <person name="Caudy A.A."/>
            <person name="Durocher D."/>
            <person name="Sicheri F."/>
        </authorList>
    </citation>
    <scope>FUNCTION IN THE EKC/KEOPS COMPLEX</scope>
</reference>
<comment type="function">
    <text evidence="1 4 5 6 7 8 9 10">Component of the EKC/KEOPS complex that is required for the formation of a threonylcarbamoyl group on adenosine at position 37 (t(6)A37) in tRNAs that read codons beginning with adenine. The complex is probably involved in the transfer of the threonylcarbamoyl moiety of threonylcarbamoyl-AMP (TC-AMP) to the N6 group of A37. KAE1 likely plays a direct catalytic role in this reaction, but requires other protein(s) of the complex to fulfill this activity. The EKC/KEOPS complex also promotes both telomere uncapping and telomere elongation. The complex is required for efficient recruitment of transcriptional coactivators.</text>
</comment>
<comment type="catalytic activity">
    <reaction evidence="1">
        <text>L-threonylcarbamoyladenylate + adenosine(37) in tRNA = N(6)-L-threonylcarbamoyladenosine(37) in tRNA + AMP + H(+)</text>
        <dbReference type="Rhea" id="RHEA:37059"/>
        <dbReference type="Rhea" id="RHEA-COMP:10162"/>
        <dbReference type="Rhea" id="RHEA-COMP:10163"/>
        <dbReference type="ChEBI" id="CHEBI:15378"/>
        <dbReference type="ChEBI" id="CHEBI:73682"/>
        <dbReference type="ChEBI" id="CHEBI:74411"/>
        <dbReference type="ChEBI" id="CHEBI:74418"/>
        <dbReference type="ChEBI" id="CHEBI:456215"/>
        <dbReference type="EC" id="2.3.1.234"/>
    </reaction>
</comment>
<comment type="cofactor">
    <cofactor evidence="1">
        <name>a divalent metal cation</name>
        <dbReference type="ChEBI" id="CHEBI:60240"/>
    </cofactor>
    <text evidence="1">Binds 1 divalent metal cation per subunit.</text>
</comment>
<comment type="subunit">
    <text evidence="1 4 5">Component of the EKC/KEOPS complex composed of at least BUD32, CGI121, GON7, KAE1 and PCC1; the whole complex dimerizes.</text>
</comment>
<comment type="interaction">
    <interactant intactId="EBI-26411">
        <id>P36132</id>
    </interactant>
    <interactant intactId="EBI-3809">
        <id>P53323</id>
        <label>BUD32</label>
    </interactant>
    <organismsDiffer>false</organismsDiffer>
    <experiments>22</experiments>
</comment>
<comment type="interaction">
    <interactant intactId="EBI-26411">
        <id>P36132</id>
    </interactant>
    <interactant intactId="EBI-26178">
        <id>P46984</id>
        <label>GON7</label>
    </interactant>
    <organismsDiffer>false</organismsDiffer>
    <experiments>9</experiments>
</comment>
<comment type="subcellular location">
    <subcellularLocation>
        <location evidence="1 2">Cytoplasm</location>
    </subcellularLocation>
    <subcellularLocation>
        <location evidence="1 2 5">Nucleus</location>
    </subcellularLocation>
</comment>
<comment type="miscellaneous">
    <text evidence="3">Present with 1270 molecules/cell in log phase SD medium.</text>
</comment>
<comment type="similarity">
    <text evidence="1">Belongs to the KAE1 / TsaD family.</text>
</comment>
<comment type="sequence caution" evidence="11">
    <conflict type="erroneous initiation">
        <sequence resource="EMBL-CDS" id="CAA82112"/>
    </conflict>
    <text>Extended N-terminus.</text>
</comment>
<dbReference type="EC" id="2.3.1.234" evidence="1"/>
<dbReference type="EMBL" id="Z28263">
    <property type="protein sequence ID" value="CAA82112.1"/>
    <property type="status" value="ALT_INIT"/>
    <property type="molecule type" value="Genomic_DNA"/>
</dbReference>
<dbReference type="EMBL" id="BK006944">
    <property type="protein sequence ID" value="DAA09191.1"/>
    <property type="molecule type" value="Genomic_DNA"/>
</dbReference>
<dbReference type="PIR" id="S38110">
    <property type="entry name" value="S38110"/>
</dbReference>
<dbReference type="RefSeq" id="NP_012964.2">
    <property type="nucleotide sequence ID" value="NM_001179828.1"/>
</dbReference>
<dbReference type="SMR" id="P36132"/>
<dbReference type="BioGRID" id="34169">
    <property type="interactions" value="176"/>
</dbReference>
<dbReference type="ComplexPortal" id="CPX-995">
    <property type="entry name" value="KEOPS tRNA N6-adenosine threonylcarbamoyltransferase complex"/>
</dbReference>
<dbReference type="DIP" id="DIP-6421N"/>
<dbReference type="FunCoup" id="P36132">
    <property type="interactions" value="679"/>
</dbReference>
<dbReference type="IntAct" id="P36132">
    <property type="interactions" value="60"/>
</dbReference>
<dbReference type="MINT" id="P36132"/>
<dbReference type="STRING" id="4932.YKR038C"/>
<dbReference type="GlyGen" id="P36132">
    <property type="glycosylation" value="1 site"/>
</dbReference>
<dbReference type="iPTMnet" id="P36132"/>
<dbReference type="PaxDb" id="4932-YKR038C"/>
<dbReference type="PeptideAtlas" id="P36132"/>
<dbReference type="EnsemblFungi" id="YKR038C_mRNA">
    <property type="protein sequence ID" value="YKR038C"/>
    <property type="gene ID" value="YKR038C"/>
</dbReference>
<dbReference type="GeneID" id="853910"/>
<dbReference type="KEGG" id="sce:YKR038C"/>
<dbReference type="AGR" id="SGD:S000001746"/>
<dbReference type="SGD" id="S000001746">
    <property type="gene designation" value="KAE1"/>
</dbReference>
<dbReference type="VEuPathDB" id="FungiDB:YKR038C"/>
<dbReference type="eggNOG" id="KOG2708">
    <property type="taxonomic scope" value="Eukaryota"/>
</dbReference>
<dbReference type="GeneTree" id="ENSGT00940000153744"/>
<dbReference type="HOGENOM" id="CLU_023208_2_2_1"/>
<dbReference type="InParanoid" id="P36132"/>
<dbReference type="OMA" id="HHRSWVV"/>
<dbReference type="OrthoDB" id="10254073at2759"/>
<dbReference type="BioCyc" id="MetaCyc:G3O-32010-MONOMER"/>
<dbReference type="BioCyc" id="YEAST:G3O-32010-MONOMER"/>
<dbReference type="BRENDA" id="2.3.1.234">
    <property type="organism ID" value="984"/>
</dbReference>
<dbReference type="BioGRID-ORCS" id="853910">
    <property type="hits" value="7 hits in 10 CRISPR screens"/>
</dbReference>
<dbReference type="PRO" id="PR:P36132"/>
<dbReference type="Proteomes" id="UP000002311">
    <property type="component" value="Chromosome XI"/>
</dbReference>
<dbReference type="RNAct" id="P36132">
    <property type="molecule type" value="protein"/>
</dbReference>
<dbReference type="GO" id="GO:0000785">
    <property type="term" value="C:chromatin"/>
    <property type="evidence" value="ECO:0000314"/>
    <property type="project" value="SGD"/>
</dbReference>
<dbReference type="GO" id="GO:0005737">
    <property type="term" value="C:cytoplasm"/>
    <property type="evidence" value="ECO:0007005"/>
    <property type="project" value="SGD"/>
</dbReference>
<dbReference type="GO" id="GO:0000408">
    <property type="term" value="C:EKC/KEOPS complex"/>
    <property type="evidence" value="ECO:0000314"/>
    <property type="project" value="SGD"/>
</dbReference>
<dbReference type="GO" id="GO:0005654">
    <property type="term" value="C:nucleoplasm"/>
    <property type="evidence" value="ECO:0000304"/>
    <property type="project" value="Reactome"/>
</dbReference>
<dbReference type="GO" id="GO:0005634">
    <property type="term" value="C:nucleus"/>
    <property type="evidence" value="ECO:0007005"/>
    <property type="project" value="SGD"/>
</dbReference>
<dbReference type="GO" id="GO:0031490">
    <property type="term" value="F:chromatin DNA binding"/>
    <property type="evidence" value="ECO:0000314"/>
    <property type="project" value="SGD"/>
</dbReference>
<dbReference type="GO" id="GO:0046872">
    <property type="term" value="F:metal ion binding"/>
    <property type="evidence" value="ECO:0007669"/>
    <property type="project" value="UniProtKB-KW"/>
</dbReference>
<dbReference type="GO" id="GO:0061711">
    <property type="term" value="F:N(6)-L-threonylcarbamoyladenine synthase activity"/>
    <property type="evidence" value="ECO:0007669"/>
    <property type="project" value="UniProtKB-EC"/>
</dbReference>
<dbReference type="GO" id="GO:0008252">
    <property type="term" value="F:nucleotidase activity"/>
    <property type="evidence" value="ECO:0000314"/>
    <property type="project" value="SGD"/>
</dbReference>
<dbReference type="GO" id="GO:0051276">
    <property type="term" value="P:chromosome organization"/>
    <property type="evidence" value="ECO:0000315"/>
    <property type="project" value="SGD"/>
</dbReference>
<dbReference type="GO" id="GO:1990145">
    <property type="term" value="P:maintenance of translational fidelity"/>
    <property type="evidence" value="ECO:0000303"/>
    <property type="project" value="ComplexPortal"/>
</dbReference>
<dbReference type="GO" id="GO:0045944">
    <property type="term" value="P:positive regulation of transcription by RNA polymerase II"/>
    <property type="evidence" value="ECO:0000353"/>
    <property type="project" value="SGD"/>
</dbReference>
<dbReference type="GO" id="GO:0000723">
    <property type="term" value="P:telomere maintenance"/>
    <property type="evidence" value="ECO:0000315"/>
    <property type="project" value="SGD"/>
</dbReference>
<dbReference type="GO" id="GO:0000722">
    <property type="term" value="P:telomere maintenance via recombination"/>
    <property type="evidence" value="ECO:0000315"/>
    <property type="project" value="SGD"/>
</dbReference>
<dbReference type="GO" id="GO:0006400">
    <property type="term" value="P:tRNA modification"/>
    <property type="evidence" value="ECO:0000314"/>
    <property type="project" value="SGD"/>
</dbReference>
<dbReference type="GO" id="GO:0070525">
    <property type="term" value="P:tRNA threonylcarbamoyladenosine metabolic process"/>
    <property type="evidence" value="ECO:0000315"/>
    <property type="project" value="SGD"/>
</dbReference>
<dbReference type="GO" id="GO:0002949">
    <property type="term" value="P:tRNA threonylcarbamoyladenosine modification"/>
    <property type="evidence" value="ECO:0000303"/>
    <property type="project" value="ComplexPortal"/>
</dbReference>
<dbReference type="CDD" id="cd24132">
    <property type="entry name" value="ASKHA_NBD_OSGEP_like_euk"/>
    <property type="match status" value="1"/>
</dbReference>
<dbReference type="FunFam" id="3.30.420.40:FF:000038">
    <property type="entry name" value="Probable tRNA N6-adenosine threonylcarbamoyltransferase"/>
    <property type="match status" value="1"/>
</dbReference>
<dbReference type="Gene3D" id="3.30.420.40">
    <property type="match status" value="2"/>
</dbReference>
<dbReference type="HAMAP" id="MF_01446">
    <property type="entry name" value="Kae1"/>
    <property type="match status" value="1"/>
</dbReference>
<dbReference type="InterPro" id="IPR043129">
    <property type="entry name" value="ATPase_NBD"/>
</dbReference>
<dbReference type="InterPro" id="IPR000905">
    <property type="entry name" value="Gcp-like_dom"/>
</dbReference>
<dbReference type="InterPro" id="IPR017861">
    <property type="entry name" value="KAE1/TsaD"/>
</dbReference>
<dbReference type="InterPro" id="IPR034680">
    <property type="entry name" value="Kae1_archaea_euk"/>
</dbReference>
<dbReference type="InterPro" id="IPR017860">
    <property type="entry name" value="Peptidase_M22_CS"/>
</dbReference>
<dbReference type="NCBIfam" id="TIGR00329">
    <property type="entry name" value="gcp_kae1"/>
    <property type="match status" value="1"/>
</dbReference>
<dbReference type="PANTHER" id="PTHR11735">
    <property type="entry name" value="TRNA N6-ADENOSINE THREONYLCARBAMOYLTRANSFERASE"/>
    <property type="match status" value="1"/>
</dbReference>
<dbReference type="PANTHER" id="PTHR11735:SF14">
    <property type="entry name" value="TRNA N6-ADENOSINE THREONYLCARBAMOYLTRANSFERASE"/>
    <property type="match status" value="1"/>
</dbReference>
<dbReference type="Pfam" id="PF00814">
    <property type="entry name" value="TsaD"/>
    <property type="match status" value="1"/>
</dbReference>
<dbReference type="PRINTS" id="PR00789">
    <property type="entry name" value="OSIALOPTASE"/>
</dbReference>
<dbReference type="SUPFAM" id="SSF53067">
    <property type="entry name" value="Actin-like ATPase domain"/>
    <property type="match status" value="1"/>
</dbReference>
<dbReference type="PROSITE" id="PS01016">
    <property type="entry name" value="GLYCOPROTEASE"/>
    <property type="match status" value="1"/>
</dbReference>
<evidence type="ECO:0000255" key="1">
    <source>
        <dbReference type="HAMAP-Rule" id="MF_03180"/>
    </source>
</evidence>
<evidence type="ECO:0000269" key="2">
    <source>
    </source>
</evidence>
<evidence type="ECO:0000269" key="3">
    <source>
    </source>
</evidence>
<evidence type="ECO:0000269" key="4">
    <source>
    </source>
</evidence>
<evidence type="ECO:0000269" key="5">
    <source>
    </source>
</evidence>
<evidence type="ECO:0000269" key="6">
    <source>
    </source>
</evidence>
<evidence type="ECO:0000269" key="7">
    <source>
    </source>
</evidence>
<evidence type="ECO:0000269" key="8">
    <source>
    </source>
</evidence>
<evidence type="ECO:0000269" key="9">
    <source>
    </source>
</evidence>
<evidence type="ECO:0000269" key="10">
    <source>
    </source>
</evidence>
<evidence type="ECO:0000305" key="11"/>
<feature type="chain" id="PRO_0000096989" description="tRNA N6-adenosine threonylcarbamoyltransferase">
    <location>
        <begin position="1"/>
        <end position="386"/>
    </location>
</feature>
<feature type="binding site" evidence="1">
    <location>
        <position position="141"/>
    </location>
    <ligand>
        <name>a divalent metal cation</name>
        <dbReference type="ChEBI" id="CHEBI:60240"/>
    </ligand>
</feature>
<feature type="binding site" evidence="1">
    <location>
        <position position="145"/>
    </location>
    <ligand>
        <name>a divalent metal cation</name>
        <dbReference type="ChEBI" id="CHEBI:60240"/>
    </ligand>
</feature>
<feature type="binding site" evidence="1">
    <location>
        <begin position="162"/>
        <end position="166"/>
    </location>
    <ligand>
        <name>substrate</name>
    </ligand>
</feature>
<feature type="binding site" evidence="1">
    <location>
        <position position="162"/>
    </location>
    <ligand>
        <name>a divalent metal cation</name>
        <dbReference type="ChEBI" id="CHEBI:60240"/>
    </ligand>
</feature>
<feature type="binding site" evidence="1">
    <location>
        <position position="194"/>
    </location>
    <ligand>
        <name>substrate</name>
    </ligand>
</feature>
<feature type="binding site" evidence="1">
    <location>
        <position position="209"/>
    </location>
    <ligand>
        <name>substrate</name>
    </ligand>
</feature>
<feature type="binding site" evidence="1">
    <location>
        <position position="213"/>
    </location>
    <ligand>
        <name>substrate</name>
    </ligand>
</feature>
<feature type="binding site" evidence="1">
    <location>
        <position position="315"/>
    </location>
    <ligand>
        <name>substrate</name>
    </ligand>
</feature>
<feature type="binding site" evidence="1">
    <location>
        <position position="344"/>
    </location>
    <ligand>
        <name>a divalent metal cation</name>
        <dbReference type="ChEBI" id="CHEBI:60240"/>
    </ligand>
</feature>
<accession>P36132</accession>
<accession>D6VXA1</accession>